<feature type="chain" id="PRO_1000011084" description="Phosphopantetheine adenylyltransferase">
    <location>
        <begin position="1"/>
        <end position="169"/>
    </location>
</feature>
<feature type="binding site" evidence="1">
    <location>
        <begin position="13"/>
        <end position="14"/>
    </location>
    <ligand>
        <name>ATP</name>
        <dbReference type="ChEBI" id="CHEBI:30616"/>
    </ligand>
</feature>
<feature type="binding site" evidence="1">
    <location>
        <position position="13"/>
    </location>
    <ligand>
        <name>substrate</name>
    </ligand>
</feature>
<feature type="binding site" evidence="1">
    <location>
        <position position="21"/>
    </location>
    <ligand>
        <name>ATP</name>
        <dbReference type="ChEBI" id="CHEBI:30616"/>
    </ligand>
</feature>
<feature type="binding site" evidence="1">
    <location>
        <position position="45"/>
    </location>
    <ligand>
        <name>substrate</name>
    </ligand>
</feature>
<feature type="binding site" evidence="1">
    <location>
        <position position="82"/>
    </location>
    <ligand>
        <name>substrate</name>
    </ligand>
</feature>
<feature type="binding site" evidence="1">
    <location>
        <position position="96"/>
    </location>
    <ligand>
        <name>substrate</name>
    </ligand>
</feature>
<feature type="binding site" evidence="1">
    <location>
        <begin position="97"/>
        <end position="99"/>
    </location>
    <ligand>
        <name>ATP</name>
        <dbReference type="ChEBI" id="CHEBI:30616"/>
    </ligand>
</feature>
<feature type="binding site" evidence="1">
    <location>
        <position position="107"/>
    </location>
    <ligand>
        <name>ATP</name>
        <dbReference type="ChEBI" id="CHEBI:30616"/>
    </ligand>
</feature>
<feature type="binding site" evidence="1">
    <location>
        <begin position="132"/>
        <end position="138"/>
    </location>
    <ligand>
        <name>ATP</name>
        <dbReference type="ChEBI" id="CHEBI:30616"/>
    </ligand>
</feature>
<feature type="site" description="Transition state stabilizer" evidence="1">
    <location>
        <position position="21"/>
    </location>
</feature>
<gene>
    <name evidence="1" type="primary">coaD</name>
    <name type="ordered locus">Acry_1178</name>
</gene>
<reference key="1">
    <citation type="submission" date="2007-05" db="EMBL/GenBank/DDBJ databases">
        <title>Complete sequence of chromosome of Acidiphilium cryptum JF-5.</title>
        <authorList>
            <consortium name="US DOE Joint Genome Institute"/>
            <person name="Copeland A."/>
            <person name="Lucas S."/>
            <person name="Lapidus A."/>
            <person name="Barry K."/>
            <person name="Detter J.C."/>
            <person name="Glavina del Rio T."/>
            <person name="Hammon N."/>
            <person name="Israni S."/>
            <person name="Dalin E."/>
            <person name="Tice H."/>
            <person name="Pitluck S."/>
            <person name="Sims D."/>
            <person name="Brettin T."/>
            <person name="Bruce D."/>
            <person name="Han C."/>
            <person name="Schmutz J."/>
            <person name="Larimer F."/>
            <person name="Land M."/>
            <person name="Hauser L."/>
            <person name="Kyrpides N."/>
            <person name="Kim E."/>
            <person name="Magnuson T."/>
            <person name="Richardson P."/>
        </authorList>
    </citation>
    <scope>NUCLEOTIDE SEQUENCE [LARGE SCALE GENOMIC DNA]</scope>
    <source>
        <strain>JF-5</strain>
    </source>
</reference>
<keyword id="KW-0067">ATP-binding</keyword>
<keyword id="KW-0173">Coenzyme A biosynthesis</keyword>
<keyword id="KW-0963">Cytoplasm</keyword>
<keyword id="KW-0460">Magnesium</keyword>
<keyword id="KW-0547">Nucleotide-binding</keyword>
<keyword id="KW-0548">Nucleotidyltransferase</keyword>
<keyword id="KW-1185">Reference proteome</keyword>
<keyword id="KW-0808">Transferase</keyword>
<organism>
    <name type="scientific">Acidiphilium cryptum (strain JF-5)</name>
    <dbReference type="NCBI Taxonomy" id="349163"/>
    <lineage>
        <taxon>Bacteria</taxon>
        <taxon>Pseudomonadati</taxon>
        <taxon>Pseudomonadota</taxon>
        <taxon>Alphaproteobacteria</taxon>
        <taxon>Acetobacterales</taxon>
        <taxon>Acidocellaceae</taxon>
        <taxon>Acidiphilium</taxon>
    </lineage>
</organism>
<evidence type="ECO:0000255" key="1">
    <source>
        <dbReference type="HAMAP-Rule" id="MF_00151"/>
    </source>
</evidence>
<name>COAD_ACICJ</name>
<proteinExistence type="inferred from homology"/>
<accession>A5FXQ8</accession>
<comment type="function">
    <text evidence="1">Reversibly transfers an adenylyl group from ATP to 4'-phosphopantetheine, yielding dephospho-CoA (dPCoA) and pyrophosphate.</text>
</comment>
<comment type="catalytic activity">
    <reaction evidence="1">
        <text>(R)-4'-phosphopantetheine + ATP + H(+) = 3'-dephospho-CoA + diphosphate</text>
        <dbReference type="Rhea" id="RHEA:19801"/>
        <dbReference type="ChEBI" id="CHEBI:15378"/>
        <dbReference type="ChEBI" id="CHEBI:30616"/>
        <dbReference type="ChEBI" id="CHEBI:33019"/>
        <dbReference type="ChEBI" id="CHEBI:57328"/>
        <dbReference type="ChEBI" id="CHEBI:61723"/>
        <dbReference type="EC" id="2.7.7.3"/>
    </reaction>
</comment>
<comment type="cofactor">
    <cofactor evidence="1">
        <name>Mg(2+)</name>
        <dbReference type="ChEBI" id="CHEBI:18420"/>
    </cofactor>
</comment>
<comment type="pathway">
    <text evidence="1">Cofactor biosynthesis; coenzyme A biosynthesis; CoA from (R)-pantothenate: step 4/5.</text>
</comment>
<comment type="subunit">
    <text evidence="1">Homohexamer.</text>
</comment>
<comment type="subcellular location">
    <subcellularLocation>
        <location evidence="1">Cytoplasm</location>
    </subcellularLocation>
</comment>
<comment type="similarity">
    <text evidence="1">Belongs to the bacterial CoaD family.</text>
</comment>
<sequence>MADGGLIGLYPGTFDPITNGHLDIIGRAAQLCSKLVIGVARNAGKGPLFPTAERVEMVRAEIAPIAERTGTEIDVQAFDSLLIAFAQQVSAQVIVRGLRAVSDFDYEFQMAGMNARLDQRIETIFLMASERHQFISSRFVKEIAQLGGDISSFVPKLTLERTLRRVGRP</sequence>
<dbReference type="EC" id="2.7.7.3" evidence="1"/>
<dbReference type="EMBL" id="CP000697">
    <property type="protein sequence ID" value="ABQ30390.1"/>
    <property type="molecule type" value="Genomic_DNA"/>
</dbReference>
<dbReference type="RefSeq" id="WP_011942052.1">
    <property type="nucleotide sequence ID" value="NC_009484.1"/>
</dbReference>
<dbReference type="SMR" id="A5FXQ8"/>
<dbReference type="STRING" id="349163.Acry_1178"/>
<dbReference type="KEGG" id="acr:Acry_1178"/>
<dbReference type="eggNOG" id="COG0669">
    <property type="taxonomic scope" value="Bacteria"/>
</dbReference>
<dbReference type="HOGENOM" id="CLU_100149_0_1_5"/>
<dbReference type="UniPathway" id="UPA00241">
    <property type="reaction ID" value="UER00355"/>
</dbReference>
<dbReference type="Proteomes" id="UP000000245">
    <property type="component" value="Chromosome"/>
</dbReference>
<dbReference type="GO" id="GO:0005737">
    <property type="term" value="C:cytoplasm"/>
    <property type="evidence" value="ECO:0007669"/>
    <property type="project" value="UniProtKB-SubCell"/>
</dbReference>
<dbReference type="GO" id="GO:0005524">
    <property type="term" value="F:ATP binding"/>
    <property type="evidence" value="ECO:0007669"/>
    <property type="project" value="UniProtKB-KW"/>
</dbReference>
<dbReference type="GO" id="GO:0004595">
    <property type="term" value="F:pantetheine-phosphate adenylyltransferase activity"/>
    <property type="evidence" value="ECO:0007669"/>
    <property type="project" value="UniProtKB-UniRule"/>
</dbReference>
<dbReference type="GO" id="GO:0015937">
    <property type="term" value="P:coenzyme A biosynthetic process"/>
    <property type="evidence" value="ECO:0007669"/>
    <property type="project" value="UniProtKB-UniRule"/>
</dbReference>
<dbReference type="CDD" id="cd02163">
    <property type="entry name" value="PPAT"/>
    <property type="match status" value="1"/>
</dbReference>
<dbReference type="Gene3D" id="3.40.50.620">
    <property type="entry name" value="HUPs"/>
    <property type="match status" value="1"/>
</dbReference>
<dbReference type="HAMAP" id="MF_00151">
    <property type="entry name" value="PPAT_bact"/>
    <property type="match status" value="1"/>
</dbReference>
<dbReference type="InterPro" id="IPR004821">
    <property type="entry name" value="Cyt_trans-like"/>
</dbReference>
<dbReference type="InterPro" id="IPR001980">
    <property type="entry name" value="PPAT"/>
</dbReference>
<dbReference type="InterPro" id="IPR014729">
    <property type="entry name" value="Rossmann-like_a/b/a_fold"/>
</dbReference>
<dbReference type="NCBIfam" id="TIGR01510">
    <property type="entry name" value="coaD_prev_kdtB"/>
    <property type="match status" value="1"/>
</dbReference>
<dbReference type="NCBIfam" id="TIGR00125">
    <property type="entry name" value="cyt_tran_rel"/>
    <property type="match status" value="1"/>
</dbReference>
<dbReference type="PANTHER" id="PTHR21342">
    <property type="entry name" value="PHOSPHOPANTETHEINE ADENYLYLTRANSFERASE"/>
    <property type="match status" value="1"/>
</dbReference>
<dbReference type="PANTHER" id="PTHR21342:SF1">
    <property type="entry name" value="PHOSPHOPANTETHEINE ADENYLYLTRANSFERASE"/>
    <property type="match status" value="1"/>
</dbReference>
<dbReference type="Pfam" id="PF01467">
    <property type="entry name" value="CTP_transf_like"/>
    <property type="match status" value="1"/>
</dbReference>
<dbReference type="PRINTS" id="PR01020">
    <property type="entry name" value="LPSBIOSNTHSS"/>
</dbReference>
<dbReference type="SUPFAM" id="SSF52374">
    <property type="entry name" value="Nucleotidylyl transferase"/>
    <property type="match status" value="1"/>
</dbReference>
<protein>
    <recommendedName>
        <fullName evidence="1">Phosphopantetheine adenylyltransferase</fullName>
        <ecNumber evidence="1">2.7.7.3</ecNumber>
    </recommendedName>
    <alternativeName>
        <fullName evidence="1">Dephospho-CoA pyrophosphorylase</fullName>
    </alternativeName>
    <alternativeName>
        <fullName evidence="1">Pantetheine-phosphate adenylyltransferase</fullName>
        <shortName evidence="1">PPAT</shortName>
    </alternativeName>
</protein>